<sequence>MTLAFKILFPRNLCALGRKELCLFPEQNRWAAISQFSQWSETNLLGGCCLLQRRKPVLALQRGHLRPRATHLTFWPGSHVGLCTGPCAMAEQRFCVDYAKRGTAGCKKCKEKIVKGVCRIGKVVPNPFSESGGDMKEWYHIKCMFEKLERARATTKKIEDLTELEGWEELEDNEKEQISQHIADLSSKAAATPKKKAAVQAKLTTTGQVTSPVKGASFITSTNPRKFSGFSAAKPNNSEQAPSSPAPGTSLSASKCDPKHKDCLLREFRKLCAMVAENPSYNTKTQIIHDFLQKGSTGGFSDGFHGDVYLTVKLLLPGVIKSVYNLNDKQIVKLFSRIFNCNPDDMARDLEQGDVSETIRIFFEQSKSFPPAAKSLLTIQEVDAFLLHLSKLTKEDEQQQALQDIASRCTANDLKCIIRLIKHDLKMNSGAKHVLDALDPNAYEAFKASRNLQDVVERVLHNEQEVEKDPGRRRALRVQASLMTPVQPMLAEACKSIEYAMKKCPNGMFSEIKYDGERVQVHKKGDHFSYFSRSLKPVLPHKVAHFKDYIPKAFPGGQSMILDSEVLLIDNNTGKPLPFGTLGVHKKAAFQDANVCLFVFDCIYFNDVSLMDRPLCERRKFLHDNMVEIRNRIMFSEMKQVTKASDLADMINRVIREGLEGLVLKDVKGTYEPGKRHWLKVKKDYLNEGAMADTADLVVLGAFYGQGSKGGMMSIFLMGCYDPDSQKWCTVTKCAGGHDDATLARLQKELVMVKISKDPSKIPSWLKINKIYYPDFIVPDPKKAAVWEITGAEFSRSEAHTADGISIRFPRCTRIRDDKDWKSATNLPQLKELYQLSKDKADFAVVAGDEASPTTGGSSGENEGTAGSAGPCKGPPSKSSASAKTTEQKLNSPSSRGGIKPIPKHSPMKPGEKLAVKSSPVKVGMKRKATDETPCLKKVLLDVFTGVRLYLPPSTPDFKRLKRYFVAFDGDLVQEFDMGSATHVLGNREKNTDAQLVSSEWIWACIRKRRLIAPC</sequence>
<protein>
    <recommendedName>
        <fullName>DNA ligase 3</fullName>
        <ecNumber evidence="5">6.5.1.1</ecNumber>
    </recommendedName>
    <alternativeName>
        <fullName>DNA ligase III</fullName>
    </alternativeName>
    <alternativeName>
        <fullName>Polydeoxyribonucleotide synthase [ATP] 3</fullName>
    </alternativeName>
</protein>
<keyword id="KW-0025">Alternative splicing</keyword>
<keyword id="KW-0067">ATP-binding</keyword>
<keyword id="KW-0131">Cell cycle</keyword>
<keyword id="KW-0132">Cell division</keyword>
<keyword id="KW-0227">DNA damage</keyword>
<keyword id="KW-0233">DNA recombination</keyword>
<keyword id="KW-0234">DNA repair</keyword>
<keyword id="KW-0235">DNA replication</keyword>
<keyword id="KW-0436">Ligase</keyword>
<keyword id="KW-0460">Magnesium</keyword>
<keyword id="KW-0479">Metal-binding</keyword>
<keyword id="KW-0547">Nucleotide-binding</keyword>
<keyword id="KW-0539">Nucleus</keyword>
<keyword id="KW-0597">Phosphoprotein</keyword>
<keyword id="KW-1185">Reference proteome</keyword>
<keyword id="KW-0862">Zinc</keyword>
<keyword id="KW-0863">Zinc-finger</keyword>
<dbReference type="EC" id="6.5.1.1" evidence="5"/>
<dbReference type="EMBL" id="U66058">
    <property type="protein sequence ID" value="AAC53004.1"/>
    <property type="molecule type" value="mRNA"/>
</dbReference>
<dbReference type="EMBL" id="U66057">
    <property type="protein sequence ID" value="AAC53003.1"/>
    <property type="molecule type" value="mRNA"/>
</dbReference>
<dbReference type="EMBL" id="AL645594">
    <property type="status" value="NOT_ANNOTATED_CDS"/>
    <property type="molecule type" value="Genomic_DNA"/>
</dbReference>
<dbReference type="BMRB" id="P97386"/>
<dbReference type="SMR" id="P97386"/>
<dbReference type="FunCoup" id="P97386">
    <property type="interactions" value="3932"/>
</dbReference>
<dbReference type="IntAct" id="P97386">
    <property type="interactions" value="2"/>
</dbReference>
<dbReference type="STRING" id="10090.ENSMUSP00000133805"/>
<dbReference type="GlyGen" id="P97386">
    <property type="glycosylation" value="3 sites, 1 O-linked glycan (3 sites)"/>
</dbReference>
<dbReference type="iPTMnet" id="P97386"/>
<dbReference type="PhosphoSitePlus" id="P97386"/>
<dbReference type="jPOST" id="P97386"/>
<dbReference type="PaxDb" id="10090-ENSMUSP00000090525"/>
<dbReference type="PeptideAtlas" id="P97386"/>
<dbReference type="ProteomicsDB" id="277355">
    <molecule id="P97386-1"/>
</dbReference>
<dbReference type="ProteomicsDB" id="277356">
    <molecule id="P97386-2"/>
</dbReference>
<dbReference type="Pumba" id="P97386"/>
<dbReference type="AGR" id="MGI:109152"/>
<dbReference type="MGI" id="MGI:109152">
    <property type="gene designation" value="Lig3"/>
</dbReference>
<dbReference type="eggNOG" id="KOG4437">
    <property type="taxonomic scope" value="Eukaryota"/>
</dbReference>
<dbReference type="InParanoid" id="P97386"/>
<dbReference type="Reactome" id="R-MMU-110381">
    <property type="pathway name" value="Resolution of AP sites via the single-nucleotide replacement pathway"/>
</dbReference>
<dbReference type="Reactome" id="R-MMU-5649702">
    <property type="pathway name" value="APEX1-Independent Resolution of AP Sites via the Single Nucleotide Replacement Pathway"/>
</dbReference>
<dbReference type="Reactome" id="R-MMU-5685939">
    <property type="pathway name" value="HDR through MMEJ (alt-NHEJ)"/>
</dbReference>
<dbReference type="Reactome" id="R-MMU-6782210">
    <property type="pathway name" value="Gap-filling DNA repair synthesis and ligation in TC-NER"/>
</dbReference>
<dbReference type="ChiTaRS" id="Lig3">
    <property type="organism name" value="mouse"/>
</dbReference>
<dbReference type="PRO" id="PR:P97386"/>
<dbReference type="Proteomes" id="UP000000589">
    <property type="component" value="Unplaced"/>
</dbReference>
<dbReference type="RNAct" id="P97386">
    <property type="molecule type" value="protein"/>
</dbReference>
<dbReference type="GO" id="GO:0000794">
    <property type="term" value="C:condensed nuclear chromosome"/>
    <property type="evidence" value="ECO:0000314"/>
    <property type="project" value="MGI"/>
</dbReference>
<dbReference type="GO" id="GO:0005739">
    <property type="term" value="C:mitochondrion"/>
    <property type="evidence" value="ECO:0007669"/>
    <property type="project" value="GOC"/>
</dbReference>
<dbReference type="GO" id="GO:0000795">
    <property type="term" value="C:synaptonemal complex"/>
    <property type="evidence" value="ECO:0000314"/>
    <property type="project" value="MGI"/>
</dbReference>
<dbReference type="GO" id="GO:0005524">
    <property type="term" value="F:ATP binding"/>
    <property type="evidence" value="ECO:0007669"/>
    <property type="project" value="UniProtKB-KW"/>
</dbReference>
<dbReference type="GO" id="GO:0003677">
    <property type="term" value="F:DNA binding"/>
    <property type="evidence" value="ECO:0007669"/>
    <property type="project" value="InterPro"/>
</dbReference>
<dbReference type="GO" id="GO:0003910">
    <property type="term" value="F:DNA ligase (ATP) activity"/>
    <property type="evidence" value="ECO:0007669"/>
    <property type="project" value="UniProtKB-EC"/>
</dbReference>
<dbReference type="GO" id="GO:0008270">
    <property type="term" value="F:zinc ion binding"/>
    <property type="evidence" value="ECO:0007669"/>
    <property type="project" value="UniProtKB-KW"/>
</dbReference>
<dbReference type="GO" id="GO:0051301">
    <property type="term" value="P:cell division"/>
    <property type="evidence" value="ECO:0007669"/>
    <property type="project" value="UniProtKB-KW"/>
</dbReference>
<dbReference type="GO" id="GO:0071897">
    <property type="term" value="P:DNA biosynthetic process"/>
    <property type="evidence" value="ECO:0007669"/>
    <property type="project" value="InterPro"/>
</dbReference>
<dbReference type="GO" id="GO:0006310">
    <property type="term" value="P:DNA recombination"/>
    <property type="evidence" value="ECO:0007669"/>
    <property type="project" value="UniProtKB-KW"/>
</dbReference>
<dbReference type="GO" id="GO:0006260">
    <property type="term" value="P:DNA replication"/>
    <property type="evidence" value="ECO:0007669"/>
    <property type="project" value="UniProtKB-KW"/>
</dbReference>
<dbReference type="GO" id="GO:0097681">
    <property type="term" value="P:double-strand break repair via alternative nonhomologous end joining"/>
    <property type="evidence" value="ECO:0000315"/>
    <property type="project" value="BHF-UCL"/>
</dbReference>
<dbReference type="GO" id="GO:0006303">
    <property type="term" value="P:double-strand break repair via nonhomologous end joining"/>
    <property type="evidence" value="ECO:0000315"/>
    <property type="project" value="MGI"/>
</dbReference>
<dbReference type="GO" id="GO:0043504">
    <property type="term" value="P:mitochondrial DNA repair"/>
    <property type="evidence" value="ECO:0000315"/>
    <property type="project" value="MGI"/>
</dbReference>
<dbReference type="GO" id="GO:0007005">
    <property type="term" value="P:mitochondrion organization"/>
    <property type="evidence" value="ECO:0000315"/>
    <property type="project" value="BHF-UCL"/>
</dbReference>
<dbReference type="GO" id="GO:0045910">
    <property type="term" value="P:negative regulation of DNA recombination"/>
    <property type="evidence" value="ECO:0000315"/>
    <property type="project" value="MGI"/>
</dbReference>
<dbReference type="CDD" id="cd07902">
    <property type="entry name" value="Adenylation_DNA_ligase_III"/>
    <property type="match status" value="1"/>
</dbReference>
<dbReference type="CDD" id="cd18431">
    <property type="entry name" value="BRCT_DNA_ligase_III"/>
    <property type="match status" value="1"/>
</dbReference>
<dbReference type="CDD" id="cd07967">
    <property type="entry name" value="OBF_DNA_ligase_III"/>
    <property type="match status" value="1"/>
</dbReference>
<dbReference type="FunFam" id="1.10.3260.10:FF:000002">
    <property type="entry name" value="DNA ligase"/>
    <property type="match status" value="1"/>
</dbReference>
<dbReference type="FunFam" id="2.40.50.140:FF:000085">
    <property type="entry name" value="DNA ligase"/>
    <property type="match status" value="1"/>
</dbReference>
<dbReference type="FunFam" id="3.30.1740.10:FF:000001">
    <property type="entry name" value="DNA ligase"/>
    <property type="match status" value="1"/>
</dbReference>
<dbReference type="FunFam" id="3.30.470.30:FF:000003">
    <property type="entry name" value="DNA ligase"/>
    <property type="match status" value="1"/>
</dbReference>
<dbReference type="FunFam" id="3.40.50.10190:FF:000032">
    <property type="entry name" value="DNA ligase"/>
    <property type="match status" value="1"/>
</dbReference>
<dbReference type="Gene3D" id="3.30.1490.70">
    <property type="match status" value="1"/>
</dbReference>
<dbReference type="Gene3D" id="3.40.50.10190">
    <property type="entry name" value="BRCT domain"/>
    <property type="match status" value="1"/>
</dbReference>
<dbReference type="Gene3D" id="1.10.3260.10">
    <property type="entry name" value="DNA ligase, ATP-dependent, N-terminal domain"/>
    <property type="match status" value="1"/>
</dbReference>
<dbReference type="Gene3D" id="3.30.470.30">
    <property type="entry name" value="DNA ligase/mRNA capping enzyme"/>
    <property type="match status" value="1"/>
</dbReference>
<dbReference type="Gene3D" id="2.40.50.140">
    <property type="entry name" value="Nucleic acid-binding proteins"/>
    <property type="match status" value="1"/>
</dbReference>
<dbReference type="Gene3D" id="3.30.1740.10">
    <property type="entry name" value="Zinc finger, PARP-type"/>
    <property type="match status" value="1"/>
</dbReference>
<dbReference type="InterPro" id="IPR050191">
    <property type="entry name" value="ATP-dep_DNA_ligase"/>
</dbReference>
<dbReference type="InterPro" id="IPR001357">
    <property type="entry name" value="BRCT_dom"/>
</dbReference>
<dbReference type="InterPro" id="IPR036420">
    <property type="entry name" value="BRCT_dom_sf"/>
</dbReference>
<dbReference type="InterPro" id="IPR000977">
    <property type="entry name" value="DNA_ligase_ATP-dep"/>
</dbReference>
<dbReference type="InterPro" id="IPR012309">
    <property type="entry name" value="DNA_ligase_ATP-dep_C"/>
</dbReference>
<dbReference type="InterPro" id="IPR012310">
    <property type="entry name" value="DNA_ligase_ATP-dep_cent"/>
</dbReference>
<dbReference type="InterPro" id="IPR016059">
    <property type="entry name" value="DNA_ligase_ATP-dep_CS"/>
</dbReference>
<dbReference type="InterPro" id="IPR012308">
    <property type="entry name" value="DNA_ligase_ATP-dep_N"/>
</dbReference>
<dbReference type="InterPro" id="IPR036599">
    <property type="entry name" value="DNA_ligase_N_sf"/>
</dbReference>
<dbReference type="InterPro" id="IPR031916">
    <property type="entry name" value="LIG3_BRCT"/>
</dbReference>
<dbReference type="InterPro" id="IPR012340">
    <property type="entry name" value="NA-bd_OB-fold"/>
</dbReference>
<dbReference type="InterPro" id="IPR001510">
    <property type="entry name" value="Znf_PARP"/>
</dbReference>
<dbReference type="InterPro" id="IPR036957">
    <property type="entry name" value="Znf_PARP_sf"/>
</dbReference>
<dbReference type="NCBIfam" id="TIGR00574">
    <property type="entry name" value="dnl1"/>
    <property type="match status" value="1"/>
</dbReference>
<dbReference type="PANTHER" id="PTHR45674">
    <property type="entry name" value="DNA LIGASE 1/3 FAMILY MEMBER"/>
    <property type="match status" value="1"/>
</dbReference>
<dbReference type="PANTHER" id="PTHR45674:SF9">
    <property type="entry name" value="DNA LIGASE 3"/>
    <property type="match status" value="1"/>
</dbReference>
<dbReference type="Pfam" id="PF04679">
    <property type="entry name" value="DNA_ligase_A_C"/>
    <property type="match status" value="1"/>
</dbReference>
<dbReference type="Pfam" id="PF01068">
    <property type="entry name" value="DNA_ligase_A_M"/>
    <property type="match status" value="1"/>
</dbReference>
<dbReference type="Pfam" id="PF04675">
    <property type="entry name" value="DNA_ligase_A_N"/>
    <property type="match status" value="1"/>
</dbReference>
<dbReference type="Pfam" id="PF16759">
    <property type="entry name" value="LIG3_BRCT"/>
    <property type="match status" value="1"/>
</dbReference>
<dbReference type="Pfam" id="PF00645">
    <property type="entry name" value="zf-PARP"/>
    <property type="match status" value="1"/>
</dbReference>
<dbReference type="SMART" id="SM00292">
    <property type="entry name" value="BRCT"/>
    <property type="match status" value="1"/>
</dbReference>
<dbReference type="SMART" id="SM01336">
    <property type="entry name" value="zf-PARP"/>
    <property type="match status" value="1"/>
</dbReference>
<dbReference type="SUPFAM" id="SSF117018">
    <property type="entry name" value="ATP-dependent DNA ligase DNA-binding domain"/>
    <property type="match status" value="1"/>
</dbReference>
<dbReference type="SUPFAM" id="SSF52113">
    <property type="entry name" value="BRCT domain"/>
    <property type="match status" value="1"/>
</dbReference>
<dbReference type="SUPFAM" id="SSF56091">
    <property type="entry name" value="DNA ligase/mRNA capping enzyme, catalytic domain"/>
    <property type="match status" value="1"/>
</dbReference>
<dbReference type="SUPFAM" id="SSF57716">
    <property type="entry name" value="Glucocorticoid receptor-like (DNA-binding domain)"/>
    <property type="match status" value="1"/>
</dbReference>
<dbReference type="SUPFAM" id="SSF50249">
    <property type="entry name" value="Nucleic acid-binding proteins"/>
    <property type="match status" value="1"/>
</dbReference>
<dbReference type="PROSITE" id="PS50172">
    <property type="entry name" value="BRCT"/>
    <property type="match status" value="1"/>
</dbReference>
<dbReference type="PROSITE" id="PS00697">
    <property type="entry name" value="DNA_LIGASE_A1"/>
    <property type="match status" value="1"/>
</dbReference>
<dbReference type="PROSITE" id="PS00333">
    <property type="entry name" value="DNA_LIGASE_A2"/>
    <property type="match status" value="1"/>
</dbReference>
<dbReference type="PROSITE" id="PS50160">
    <property type="entry name" value="DNA_LIGASE_A3"/>
    <property type="match status" value="1"/>
</dbReference>
<dbReference type="PROSITE" id="PS00347">
    <property type="entry name" value="ZF_PARP_1"/>
    <property type="match status" value="1"/>
</dbReference>
<dbReference type="PROSITE" id="PS50064">
    <property type="entry name" value="ZF_PARP_2"/>
    <property type="match status" value="1"/>
</dbReference>
<name>DNLI3_MOUSE</name>
<accession>P97386</accession>
<accession>E9QL81</accession>
<accession>P97385</accession>
<reference key="1">
    <citation type="journal article" date="1997" name="Mol. Cell. Biol.">
        <title>An alternative splicing event which occurs in mouse pachytene spermatocytes generates a form of DNA ligase III with distinct biochemical properties that may function in meiotic recombination.</title>
        <authorList>
            <person name="Mackey Z.B."/>
            <person name="Ramos W."/>
            <person name="Levin D.S."/>
            <person name="Walter C.A."/>
            <person name="McCarrey J.R."/>
            <person name="Tomkinson A.E."/>
        </authorList>
    </citation>
    <scope>NUCLEOTIDE SEQUENCE [MRNA] (ISOFORMS ALPHA AND BETA)</scope>
    <source>
        <tissue>Testis</tissue>
    </source>
</reference>
<reference key="2">
    <citation type="journal article" date="2009" name="PLoS Biol.">
        <title>Lineage-specific biology revealed by a finished genome assembly of the mouse.</title>
        <authorList>
            <person name="Church D.M."/>
            <person name="Goodstadt L."/>
            <person name="Hillier L.W."/>
            <person name="Zody M.C."/>
            <person name="Goldstein S."/>
            <person name="She X."/>
            <person name="Bult C.J."/>
            <person name="Agarwala R."/>
            <person name="Cherry J.L."/>
            <person name="DiCuccio M."/>
            <person name="Hlavina W."/>
            <person name="Kapustin Y."/>
            <person name="Meric P."/>
            <person name="Maglott D."/>
            <person name="Birtle Z."/>
            <person name="Marques A.C."/>
            <person name="Graves T."/>
            <person name="Zhou S."/>
            <person name="Teague B."/>
            <person name="Potamousis K."/>
            <person name="Churas C."/>
            <person name="Place M."/>
            <person name="Herschleb J."/>
            <person name="Runnheim R."/>
            <person name="Forrest D."/>
            <person name="Amos-Landgraf J."/>
            <person name="Schwartz D.C."/>
            <person name="Cheng Z."/>
            <person name="Lindblad-Toh K."/>
            <person name="Eichler E.E."/>
            <person name="Ponting C.P."/>
        </authorList>
    </citation>
    <scope>NUCLEOTIDE SEQUENCE [LARGE SCALE GENOMIC DNA]</scope>
    <source>
        <strain>C57BL/6J</strain>
    </source>
</reference>
<reference key="3">
    <citation type="journal article" date="2007" name="Proc. Natl. Acad. Sci. U.S.A.">
        <title>Large-scale phosphorylation analysis of mouse liver.</title>
        <authorList>
            <person name="Villen J."/>
            <person name="Beausoleil S.A."/>
            <person name="Gerber S.A."/>
            <person name="Gygi S.P."/>
        </authorList>
    </citation>
    <scope>PHOSPHORYLATION [LARGE SCALE ANALYSIS] AT SER-211</scope>
    <scope>IDENTIFICATION BY MASS SPECTROMETRY [LARGE SCALE ANALYSIS]</scope>
    <source>
        <tissue>Liver</tissue>
    </source>
</reference>
<reference key="4">
    <citation type="journal article" date="2009" name="Immunity">
        <title>The phagosomal proteome in interferon-gamma-activated macrophages.</title>
        <authorList>
            <person name="Trost M."/>
            <person name="English L."/>
            <person name="Lemieux S."/>
            <person name="Courcelles M."/>
            <person name="Desjardins M."/>
            <person name="Thibault P."/>
        </authorList>
    </citation>
    <scope>PHOSPHORYLATION [LARGE SCALE ANALYSIS] AT SER-211</scope>
    <scope>IDENTIFICATION BY MASS SPECTROMETRY [LARGE SCALE ANALYSIS]</scope>
</reference>
<reference key="5">
    <citation type="journal article" date="2010" name="Cell">
        <title>A tissue-specific atlas of mouse protein phosphorylation and expression.</title>
        <authorList>
            <person name="Huttlin E.L."/>
            <person name="Jedrychowski M.P."/>
            <person name="Elias J.E."/>
            <person name="Goswami T."/>
            <person name="Rad R."/>
            <person name="Beausoleil S.A."/>
            <person name="Villen J."/>
            <person name="Haas W."/>
            <person name="Sowa M.E."/>
            <person name="Gygi S.P."/>
        </authorList>
    </citation>
    <scope>PHOSPHORYLATION [LARGE SCALE ANALYSIS] AT SER-211</scope>
    <scope>IDENTIFICATION BY MASS SPECTROMETRY [LARGE SCALE ANALYSIS]</scope>
    <source>
        <tissue>Spleen</tissue>
        <tissue>Testis</tissue>
    </source>
</reference>
<feature type="chain" id="PRO_0000059575" description="DNA ligase 3">
    <location>
        <begin position="1"/>
        <end position="1015"/>
    </location>
</feature>
<feature type="domain" description="BRCT" evidence="3">
    <location>
        <begin position="939"/>
        <end position="1015"/>
    </location>
</feature>
<feature type="zinc finger region" description="PARP-type" evidence="4">
    <location>
        <begin position="94"/>
        <end position="186"/>
    </location>
</feature>
<feature type="region of interest" description="Disordered" evidence="6">
    <location>
        <begin position="229"/>
        <end position="255"/>
    </location>
</feature>
<feature type="region of interest" description="Interaction with DNA" evidence="2">
    <location>
        <begin position="279"/>
        <end position="282"/>
    </location>
</feature>
<feature type="region of interest" description="Interaction with DNA" evidence="2">
    <location>
        <begin position="323"/>
        <end position="328"/>
    </location>
</feature>
<feature type="region of interest" description="Interaction with DNA" evidence="2">
    <location>
        <begin position="393"/>
        <end position="396"/>
    </location>
</feature>
<feature type="region of interest" description="Interaction with DNA" evidence="2">
    <location>
        <begin position="426"/>
        <end position="432"/>
    </location>
</feature>
<feature type="region of interest" description="Disordered" evidence="6">
    <location>
        <begin position="849"/>
        <end position="926"/>
    </location>
</feature>
<feature type="compositionally biased region" description="Polar residues" evidence="6">
    <location>
        <begin position="234"/>
        <end position="253"/>
    </location>
</feature>
<feature type="compositionally biased region" description="Low complexity" evidence="6">
    <location>
        <begin position="854"/>
        <end position="884"/>
    </location>
</feature>
<feature type="active site" description="N6-AMP-lysine intermediate" evidence="2 5">
    <location>
        <position position="513"/>
    </location>
</feature>
<feature type="binding site" evidence="4">
    <location>
        <position position="106"/>
    </location>
    <ligand>
        <name>Zn(2+)</name>
        <dbReference type="ChEBI" id="CHEBI:29105"/>
    </ligand>
</feature>
<feature type="binding site" evidence="4">
    <location>
        <position position="109"/>
    </location>
    <ligand>
        <name>Zn(2+)</name>
        <dbReference type="ChEBI" id="CHEBI:29105"/>
    </ligand>
</feature>
<feature type="binding site" evidence="4">
    <location>
        <position position="140"/>
    </location>
    <ligand>
        <name>Zn(2+)</name>
        <dbReference type="ChEBI" id="CHEBI:29105"/>
    </ligand>
</feature>
<feature type="binding site" evidence="4">
    <location>
        <position position="143"/>
    </location>
    <ligand>
        <name>Zn(2+)</name>
        <dbReference type="ChEBI" id="CHEBI:29105"/>
    </ligand>
</feature>
<feature type="binding site" evidence="2">
    <location>
        <position position="511"/>
    </location>
    <ligand>
        <name>ATP</name>
        <dbReference type="ChEBI" id="CHEBI:30616"/>
    </ligand>
</feature>
<feature type="binding site" evidence="2">
    <location>
        <position position="518"/>
    </location>
    <ligand>
        <name>ATP</name>
        <dbReference type="ChEBI" id="CHEBI:30616"/>
    </ligand>
</feature>
<feature type="binding site" evidence="1">
    <location>
        <position position="533"/>
    </location>
    <ligand>
        <name>ATP</name>
        <dbReference type="ChEBI" id="CHEBI:30616"/>
    </ligand>
</feature>
<feature type="binding site" evidence="1">
    <location>
        <position position="565"/>
    </location>
    <ligand>
        <name>Mg(2+)</name>
        <dbReference type="ChEBI" id="CHEBI:18420"/>
        <label>1</label>
    </ligand>
</feature>
<feature type="binding site" evidence="1">
    <location>
        <position position="660"/>
    </location>
    <ligand>
        <name>Mg(2+)</name>
        <dbReference type="ChEBI" id="CHEBI:18420"/>
        <label>2</label>
    </ligand>
</feature>
<feature type="binding site" evidence="2">
    <location>
        <position position="665"/>
    </location>
    <ligand>
        <name>ATP</name>
        <dbReference type="ChEBI" id="CHEBI:30616"/>
    </ligand>
</feature>
<feature type="binding site" evidence="1">
    <location>
        <position position="676"/>
    </location>
    <ligand>
        <name>ATP</name>
        <dbReference type="ChEBI" id="CHEBI:30616"/>
    </ligand>
</feature>
<feature type="binding site" evidence="1">
    <location>
        <position position="680"/>
    </location>
    <ligand>
        <name>ATP</name>
        <dbReference type="ChEBI" id="CHEBI:30616"/>
    </ligand>
</feature>
<feature type="modified residue" description="Phosphoserine" evidence="9 10 11">
    <location>
        <position position="211"/>
    </location>
</feature>
<feature type="modified residue" description="Phosphoserine" evidence="2">
    <location>
        <position position="217"/>
    </location>
</feature>
<feature type="modified residue" description="Phosphoserine" evidence="2">
    <location>
        <position position="228"/>
    </location>
</feature>
<feature type="modified residue" description="Phosphoserine" evidence="2">
    <location>
        <position position="244"/>
    </location>
</feature>
<feature type="modified residue" description="Phosphoserine" evidence="2">
    <location>
        <position position="919"/>
    </location>
</feature>
<feature type="splice variant" id="VSP_001303" description="In isoform Beta." evidence="7">
    <original>VLLDVFTGVRLYLPPSTPDFKRLKRYFVAFDGDLVQEFDMGSATHVLGNREKNTDAQLVSSEWIWACIRKRRLIAPC</original>
    <variation>RRRASRQRGRKAMQTGRR</variation>
    <location>
        <begin position="939"/>
        <end position="1015"/>
    </location>
</feature>
<feature type="sequence conflict" description="In Ref. 1; AAC53003/AAC53004." evidence="8" ref="1">
    <original>GFS</original>
    <variation>STG</variation>
    <location>
        <begin position="299"/>
        <end position="301"/>
    </location>
</feature>
<feature type="sequence conflict" description="In Ref. 1; AAC53003/AAC53004." evidence="8" ref="1">
    <location>
        <position position="417"/>
    </location>
</feature>
<feature type="sequence conflict" description="In Ref. 1; AAC53003/AAC53004." evidence="8" ref="1">
    <original>V</original>
    <variation>L</variation>
    <location>
        <position position="595"/>
    </location>
</feature>
<feature type="sequence conflict" description="In Ref. 1; AAC53003/AAC53004." evidence="8" ref="1">
    <original>AFYG</original>
    <variation>VFLI</variation>
    <location>
        <begin position="702"/>
        <end position="705"/>
    </location>
</feature>
<proteinExistence type="evidence at protein level"/>
<evidence type="ECO:0000250" key="1"/>
<evidence type="ECO:0000250" key="2">
    <source>
        <dbReference type="UniProtKB" id="P49916"/>
    </source>
</evidence>
<evidence type="ECO:0000255" key="3">
    <source>
        <dbReference type="PROSITE-ProRule" id="PRU00033"/>
    </source>
</evidence>
<evidence type="ECO:0000255" key="4">
    <source>
        <dbReference type="PROSITE-ProRule" id="PRU00264"/>
    </source>
</evidence>
<evidence type="ECO:0000255" key="5">
    <source>
        <dbReference type="PROSITE-ProRule" id="PRU10135"/>
    </source>
</evidence>
<evidence type="ECO:0000256" key="6">
    <source>
        <dbReference type="SAM" id="MobiDB-lite"/>
    </source>
</evidence>
<evidence type="ECO:0000303" key="7">
    <source>
    </source>
</evidence>
<evidence type="ECO:0000305" key="8"/>
<evidence type="ECO:0007744" key="9">
    <source>
    </source>
</evidence>
<evidence type="ECO:0007744" key="10">
    <source>
    </source>
</evidence>
<evidence type="ECO:0007744" key="11">
    <source>
    </source>
</evidence>
<organism>
    <name type="scientific">Mus musculus</name>
    <name type="common">Mouse</name>
    <dbReference type="NCBI Taxonomy" id="10090"/>
    <lineage>
        <taxon>Eukaryota</taxon>
        <taxon>Metazoa</taxon>
        <taxon>Chordata</taxon>
        <taxon>Craniata</taxon>
        <taxon>Vertebrata</taxon>
        <taxon>Euteleostomi</taxon>
        <taxon>Mammalia</taxon>
        <taxon>Eutheria</taxon>
        <taxon>Euarchontoglires</taxon>
        <taxon>Glires</taxon>
        <taxon>Rodentia</taxon>
        <taxon>Myomorpha</taxon>
        <taxon>Muroidea</taxon>
        <taxon>Muridae</taxon>
        <taxon>Murinae</taxon>
        <taxon>Mus</taxon>
        <taxon>Mus</taxon>
    </lineage>
</organism>
<comment type="function">
    <text>The alpha isoform interacts with DNA-repair protein XRCC1 and can correct defective DNA strand-break repair and sister chromatid exchange following treatment with ionizing radiation and alkylating agents. The beta isoform does not interact with XRCC1 and may be specifically involved in the completion of homologous recombination events that occur during meiotic prophase.</text>
</comment>
<comment type="catalytic activity">
    <reaction evidence="5">
        <text>ATP + (deoxyribonucleotide)n-3'-hydroxyl + 5'-phospho-(deoxyribonucleotide)m = (deoxyribonucleotide)n+m + AMP + diphosphate.</text>
        <dbReference type="EC" id="6.5.1.1"/>
    </reaction>
</comment>
<comment type="cofactor">
    <cofactor evidence="1">
        <name>Mg(2+)</name>
        <dbReference type="ChEBI" id="CHEBI:18420"/>
    </cofactor>
</comment>
<comment type="subunit">
    <text evidence="2">Isoform 3 interacts (via BRCT domain) with the nuclear DNA-repair protein XRCC1. Interacts with POLG. Interacts with POLB.</text>
</comment>
<comment type="subcellular location">
    <subcellularLocation>
        <location>Nucleus</location>
    </subcellularLocation>
</comment>
<comment type="alternative products">
    <event type="alternative splicing"/>
    <isoform>
        <id>P97386-1</id>
        <name>Alpha</name>
        <sequence type="displayed"/>
    </isoform>
    <isoform>
        <id>P97386-2</id>
        <name>Beta</name>
        <sequence type="described" ref="VSP_001303"/>
    </isoform>
</comment>
<comment type="tissue specificity">
    <text>The alpha isoform is expressed in all tissues, while the beta isoform is expressed only in the testis.</text>
</comment>
<comment type="developmental stage">
    <text>During male germ cell differentiation, expression of the beta isoform begins in the later stages of meiotic prophase and ends in the round spermatid stage.</text>
</comment>
<comment type="domain">
    <text evidence="2">The PARP-type zinc finger is required for DNA ligase activity.</text>
</comment>
<comment type="similarity">
    <text evidence="8">Belongs to the ATP-dependent DNA ligase family.</text>
</comment>
<gene>
    <name type="primary">Lig3</name>
</gene>